<proteinExistence type="evidence at transcript level"/>
<evidence type="ECO:0000250" key="1"/>
<evidence type="ECO:0000255" key="2"/>
<evidence type="ECO:0000305" key="3"/>
<protein>
    <recommendedName>
        <fullName>Conotoxin VnMKLT1-022</fullName>
    </recommendedName>
</protein>
<sequence>MKLMCMMIVAVLFLTAWTFVTADDSINGPENRRIWEKLLSKTRDEMKNPEASKLNKKECRQPGEFCFPVVAKCCGGTCLVICI</sequence>
<keyword id="KW-0165">Cleavage on pair of basic residues</keyword>
<keyword id="KW-1015">Disulfide bond</keyword>
<keyword id="KW-0960">Knottin</keyword>
<keyword id="KW-0528">Neurotoxin</keyword>
<keyword id="KW-0964">Secreted</keyword>
<keyword id="KW-0732">Signal</keyword>
<keyword id="KW-0800">Toxin</keyword>
<comment type="subcellular location">
    <subcellularLocation>
        <location evidence="1">Secreted</location>
    </subcellularLocation>
</comment>
<comment type="tissue specificity">
    <text>Expressed by the venom duct.</text>
</comment>
<comment type="domain">
    <text evidence="1">The presence of a 'disulfide through disulfide knot' structurally defines this protein as a knottin.</text>
</comment>
<comment type="domain">
    <text>The cysteine framework is VI/VII (C-C-CC-C-C).</text>
</comment>
<comment type="similarity">
    <text evidence="3">Belongs to the conotoxin O1 superfamily.</text>
</comment>
<dbReference type="EMBL" id="AF215037">
    <property type="protein sequence ID" value="AAG60465.1"/>
    <property type="molecule type" value="mRNA"/>
</dbReference>
<dbReference type="SMR" id="Q9BPA0"/>
<dbReference type="ConoServer" id="724">
    <property type="toxin name" value="Vn6.13 precursor"/>
</dbReference>
<dbReference type="GO" id="GO:0005576">
    <property type="term" value="C:extracellular region"/>
    <property type="evidence" value="ECO:0007669"/>
    <property type="project" value="UniProtKB-SubCell"/>
</dbReference>
<dbReference type="GO" id="GO:0008200">
    <property type="term" value="F:ion channel inhibitor activity"/>
    <property type="evidence" value="ECO:0007669"/>
    <property type="project" value="InterPro"/>
</dbReference>
<dbReference type="GO" id="GO:0090729">
    <property type="term" value="F:toxin activity"/>
    <property type="evidence" value="ECO:0007669"/>
    <property type="project" value="UniProtKB-KW"/>
</dbReference>
<dbReference type="InterPro" id="IPR004214">
    <property type="entry name" value="Conotoxin"/>
</dbReference>
<dbReference type="Pfam" id="PF02950">
    <property type="entry name" value="Conotoxin"/>
    <property type="match status" value="1"/>
</dbReference>
<feature type="signal peptide" evidence="2">
    <location>
        <begin position="1"/>
        <end position="22"/>
    </location>
</feature>
<feature type="propeptide" id="PRO_0000404734" evidence="1">
    <location>
        <begin position="23"/>
        <end position="55"/>
    </location>
</feature>
<feature type="peptide" id="PRO_0000404735" description="Conotoxin VnMKLT1-022">
    <location>
        <begin position="58"/>
        <end position="83"/>
    </location>
</feature>
<feature type="disulfide bond" evidence="1">
    <location>
        <begin position="59"/>
        <end position="74"/>
    </location>
</feature>
<feature type="disulfide bond" evidence="1">
    <location>
        <begin position="66"/>
        <end position="78"/>
    </location>
</feature>
<feature type="disulfide bond" evidence="1">
    <location>
        <begin position="73"/>
        <end position="82"/>
    </location>
</feature>
<name>O1613_CONVE</name>
<organism>
    <name type="scientific">Conus ventricosus</name>
    <name type="common">Mediterranean cone</name>
    <dbReference type="NCBI Taxonomy" id="117992"/>
    <lineage>
        <taxon>Eukaryota</taxon>
        <taxon>Metazoa</taxon>
        <taxon>Spiralia</taxon>
        <taxon>Lophotrochozoa</taxon>
        <taxon>Mollusca</taxon>
        <taxon>Gastropoda</taxon>
        <taxon>Caenogastropoda</taxon>
        <taxon>Neogastropoda</taxon>
        <taxon>Conoidea</taxon>
        <taxon>Conidae</taxon>
        <taxon>Conus</taxon>
        <taxon>Lautoconus</taxon>
    </lineage>
</organism>
<reference key="1">
    <citation type="journal article" date="2001" name="Mol. Biol. Evol.">
        <title>Mechanisms for evolving hypervariability: the case of conopeptides.</title>
        <authorList>
            <person name="Conticello S.G."/>
            <person name="Gilad Y."/>
            <person name="Avidan N."/>
            <person name="Ben-Asher E."/>
            <person name="Levy Z."/>
            <person name="Fainzilber M."/>
        </authorList>
    </citation>
    <scope>NUCLEOTIDE SEQUENCE [MRNA]</scope>
    <source>
        <tissue>Venom duct</tissue>
    </source>
</reference>
<accession>Q9BPA0</accession>